<accession>A0A509AN59</accession>
<organism evidence="8">
    <name type="scientific">Plasmodium berghei (strain Anka)</name>
    <dbReference type="NCBI Taxonomy" id="5823"/>
    <lineage>
        <taxon>Eukaryota</taxon>
        <taxon>Sar</taxon>
        <taxon>Alveolata</taxon>
        <taxon>Apicomplexa</taxon>
        <taxon>Aconoidasida</taxon>
        <taxon>Haemosporida</taxon>
        <taxon>Plasmodiidae</taxon>
        <taxon>Plasmodium</taxon>
        <taxon>Plasmodium (Vinckeia)</taxon>
    </lineage>
</organism>
<feature type="chain" id="PRO_0000454704" description="Protein SEY1 homolog">
    <location>
        <begin position="1"/>
        <end position="913"/>
    </location>
</feature>
<feature type="topological domain" description="Cytoplasmic" evidence="2">
    <location>
        <begin position="1"/>
        <end position="825"/>
    </location>
</feature>
<feature type="transmembrane region" description="Helical" evidence="1">
    <location>
        <begin position="826"/>
        <end position="846"/>
    </location>
</feature>
<feature type="topological domain" description="Lumenal" evidence="2">
    <location>
        <begin position="847"/>
        <end position="849"/>
    </location>
</feature>
<feature type="transmembrane region" description="Helical" evidence="1">
    <location>
        <begin position="850"/>
        <end position="870"/>
    </location>
</feature>
<feature type="topological domain" description="Cytoplasmic" evidence="2">
    <location>
        <begin position="871"/>
        <end position="913"/>
    </location>
</feature>
<feature type="domain" description="GB1/RHD3-type G" evidence="3">
    <location>
        <begin position="33"/>
        <end position="288"/>
    </location>
</feature>
<feature type="binding site" evidence="2">
    <location>
        <begin position="43"/>
        <end position="50"/>
    </location>
    <ligand>
        <name>GTP</name>
        <dbReference type="ChEBI" id="CHEBI:37565"/>
    </ligand>
</feature>
<protein>
    <recommendedName>
        <fullName evidence="2">Protein SEY1 homolog</fullName>
        <shortName evidence="5">PbSEY1</shortName>
        <ecNumber evidence="2">3.6.5.-</ecNumber>
    </recommendedName>
</protein>
<dbReference type="EC" id="3.6.5.-" evidence="2"/>
<dbReference type="EMBL" id="LK023125">
    <property type="protein sequence ID" value="VUC56263.1"/>
    <property type="molecule type" value="Genomic_DNA"/>
</dbReference>
<dbReference type="SMR" id="A0A509AN59"/>
<dbReference type="FunCoup" id="A0A509AN59">
    <property type="interactions" value="5"/>
</dbReference>
<dbReference type="STRING" id="5823.A0A509AN59"/>
<dbReference type="VEuPathDB" id="PlasmoDB:PBANKA_1026600"/>
<dbReference type="InParanoid" id="A0A509AN59"/>
<dbReference type="OMA" id="WREISMA"/>
<dbReference type="Proteomes" id="UP000074855">
    <property type="component" value="Chromosome 10"/>
</dbReference>
<dbReference type="GO" id="GO:0005789">
    <property type="term" value="C:endoplasmic reticulum membrane"/>
    <property type="evidence" value="ECO:0007669"/>
    <property type="project" value="UniProtKB-SubCell"/>
</dbReference>
<dbReference type="GO" id="GO:0005525">
    <property type="term" value="F:GTP binding"/>
    <property type="evidence" value="ECO:0007669"/>
    <property type="project" value="UniProtKB-UniRule"/>
</dbReference>
<dbReference type="GO" id="GO:0003924">
    <property type="term" value="F:GTPase activity"/>
    <property type="evidence" value="ECO:0007669"/>
    <property type="project" value="UniProtKB-UniRule"/>
</dbReference>
<dbReference type="GO" id="GO:0016320">
    <property type="term" value="P:endoplasmic reticulum membrane fusion"/>
    <property type="evidence" value="ECO:0007669"/>
    <property type="project" value="TreeGrafter"/>
</dbReference>
<dbReference type="GO" id="GO:1990809">
    <property type="term" value="P:endoplasmic reticulum tubular network membrane organization"/>
    <property type="evidence" value="ECO:0000314"/>
    <property type="project" value="UniProtKB"/>
</dbReference>
<dbReference type="CDD" id="cd01851">
    <property type="entry name" value="GBP"/>
    <property type="match status" value="1"/>
</dbReference>
<dbReference type="FunFam" id="3.40.50.300:FF:000727">
    <property type="entry name" value="Protein SEY1 homolog"/>
    <property type="match status" value="1"/>
</dbReference>
<dbReference type="Gene3D" id="3.40.50.300">
    <property type="entry name" value="P-loop containing nucleotide triphosphate hydrolases"/>
    <property type="match status" value="1"/>
</dbReference>
<dbReference type="HAMAP" id="MF_03109">
    <property type="entry name" value="Sey1"/>
    <property type="match status" value="1"/>
</dbReference>
<dbReference type="InterPro" id="IPR030386">
    <property type="entry name" value="G_GB1_RHD3_dom"/>
</dbReference>
<dbReference type="InterPro" id="IPR027417">
    <property type="entry name" value="P-loop_NTPase"/>
</dbReference>
<dbReference type="InterPro" id="IPR008803">
    <property type="entry name" value="RHD3/Sey1"/>
</dbReference>
<dbReference type="PANTHER" id="PTHR45923">
    <property type="entry name" value="PROTEIN SEY1"/>
    <property type="match status" value="1"/>
</dbReference>
<dbReference type="PANTHER" id="PTHR45923:SF2">
    <property type="entry name" value="PROTEIN SEY1"/>
    <property type="match status" value="1"/>
</dbReference>
<dbReference type="Pfam" id="PF05879">
    <property type="entry name" value="RHD3_GTPase"/>
    <property type="match status" value="1"/>
</dbReference>
<dbReference type="SUPFAM" id="SSF52540">
    <property type="entry name" value="P-loop containing nucleoside triphosphate hydrolases"/>
    <property type="match status" value="1"/>
</dbReference>
<dbReference type="PROSITE" id="PS51715">
    <property type="entry name" value="G_GB1_RHD3"/>
    <property type="match status" value="1"/>
</dbReference>
<sequence>MTDVNKTQIIDYDGHIIDNLKEWMNNNKLSKLGFNYNVIAILGSQSSGKSTLLNNLFKTSFDVMNTKLGHSQTTQGLWLSYDKFEDELTDASNEETDVEPQNKSNNKHVINPTLILDVEGNDSKERGENRLTFEHRSALFSLALADCVIVNLWYHSLGNFTASNYGLLKTVMEVHLELFHQNVNCPKTILLFTVRDWFEEFAPLDIIREKIVDEYVNKIWCELKKSENSKNANIDDYFIIEVVGLSHGIIKKDEFLKDIKRLRHKWIYELRPINYSRNIPADGFAQYCNNIWNTIIKQSQLDIPSQQEMLATFRCQEIKNNVLNHISNTIKEKMVDSKNKYIENFKTWAEKDIIEKSLNEYLTDAARYQKIICLKTLEELLENLFIQLQIIVDNNLNFTQRILSSKFSKELNSMYSICTTDKSYFLFINDQNVDVTEQDENLSNVENIGENSKKGNQIKCINLWSNFLYNADMLEYTTIANFFDQYKKCSVEIIEPSISNNEDKDSQEKRNHDFNYKNSLTILATSIYKDTNRIRSVQCNILIERIRSTIKEELKNVDNMLITVKCSKDCWDYILKIVNKLEDYIYTNLSKCFINLKTGINTTYLNNGDNIYARLNTNCDYGLGYFQNEQITDFSDDAGKNDDEMDTEIDQNKNDMESLFNSKKFEIITKQNKKEKYVSTINNDLNKEMNNKKLISELKKFYTEIIIDALKIKLDEISNNIANIIINRFESVFNYDEIDQPRQWRNISAIELKNIFRVSKDYAFLIIEILQKNIKIDKIDNYLSTNFINTDIIEKGKIKAKKRIQEICRDAQYIQETGGHMSLKNVPFAFWVILLILGWNEILMFTRLFFRLNIILPMLIGFIIIVISCLYTGNAQILSYINKIIFIVIKNLYNFYKHLQTIGHQTTKPEKVE</sequence>
<evidence type="ECO:0000255" key="1"/>
<evidence type="ECO:0000255" key="2">
    <source>
        <dbReference type="HAMAP-Rule" id="MF_03109"/>
    </source>
</evidence>
<evidence type="ECO:0000255" key="3">
    <source>
        <dbReference type="PROSITE-ProRule" id="PRU01052"/>
    </source>
</evidence>
<evidence type="ECO:0000269" key="4">
    <source>
    </source>
</evidence>
<evidence type="ECO:0000303" key="5">
    <source>
    </source>
</evidence>
<evidence type="ECO:0000305" key="6"/>
<evidence type="ECO:0000312" key="7">
    <source>
        <dbReference type="EMBL" id="VUC56263.1"/>
    </source>
</evidence>
<evidence type="ECO:0000312" key="8">
    <source>
        <dbReference type="Proteomes" id="UP000074855"/>
    </source>
</evidence>
<proteinExistence type="inferred from homology"/>
<keyword id="KW-0256">Endoplasmic reticulum</keyword>
<keyword id="KW-0342">GTP-binding</keyword>
<keyword id="KW-0378">Hydrolase</keyword>
<keyword id="KW-0472">Membrane</keyword>
<keyword id="KW-0547">Nucleotide-binding</keyword>
<keyword id="KW-1185">Reference proteome</keyword>
<keyword id="KW-0812">Transmembrane</keyword>
<keyword id="KW-1133">Transmembrane helix</keyword>
<name>SEY1_PLABA</name>
<comment type="function">
    <text evidence="4">Probable GTP-binding protein involved in generating and maintaining the structure of the tubular endoplasmic reticulum network.</text>
</comment>
<comment type="subcellular location">
    <subcellularLocation>
        <location evidence="2">Endoplasmic reticulum membrane</location>
        <topology evidence="2">Multi-pass membrane protein</topology>
    </subcellularLocation>
</comment>
<comment type="similarity">
    <text evidence="2">Belongs to the TRAFAC class dynamin-like GTPase superfamily. GB1/RHD3 GTPase family. RHD3 subfamily.</text>
</comment>
<gene>
    <name evidence="5" type="primary">SEY1</name>
    <name evidence="7" type="ORF">PBANKA_1026600</name>
</gene>
<reference evidence="8" key="1">
    <citation type="journal article" date="2014" name="BMC Biol.">
        <title>A comprehensive evaluation of rodent malaria parasite genomes and gene expression.</title>
        <authorList>
            <person name="Otto T.D."/>
            <person name="Bohme U."/>
            <person name="Jackson A.P."/>
            <person name="Hunt M."/>
            <person name="Franke-Fayard B."/>
            <person name="Hoeijmakers W.A."/>
            <person name="Religa A.A."/>
            <person name="Robertson L."/>
            <person name="Sanders M."/>
            <person name="Ogun S.A."/>
            <person name="Cunningham D."/>
            <person name="Erhart A."/>
            <person name="Billker O."/>
            <person name="Khan S.M."/>
            <person name="Stunnenberg H.G."/>
            <person name="Langhorne J."/>
            <person name="Holder A.A."/>
            <person name="Waters A.P."/>
            <person name="Newbold C.I."/>
            <person name="Pain A."/>
            <person name="Berriman M."/>
            <person name="Janse C.J."/>
        </authorList>
    </citation>
    <scope>NUCLEOTIDE SEQUENCE [LARGE SCALE GENOMIC DNA]</scope>
    <source>
        <strain evidence="8">ANKA</strain>
    </source>
</reference>
<reference evidence="6" key="2">
    <citation type="journal article" date="2016" name="Protein Cell">
        <title>Identification of endoplasmic reticulum-shaping proteins in Plasmodium parasites.</title>
        <authorList>
            <person name="Sun S."/>
            <person name="Lv L."/>
            <person name="Yao Z."/>
            <person name="Bhanot P."/>
            <person name="Hu J."/>
            <person name="Wang Q."/>
        </authorList>
    </citation>
    <scope>FUNCTION</scope>
</reference>